<sequence>MQDILLIKYGELALKGDNRSFFENKLIKNIKHALSDFKEVKVEKTHGRIYVECDGDIEEVIERLKKVFGIVGITKAKKTDLNLDEIFKAAVELMKGHEGKTFKVETKRPNKSFPYNSMEVSRRVGAAVLKNIKNLKVDVHNPDVLLNVEIREMAFVYAGVIEGIGGLPLGTNGKATVLLSGGIDSPVAAWMMMKRGVEVEAVYFHSPPYTSERAKDKVVDLCKVLSQYGQRIKLHVVHFTDLQLEIYEKCPPKFTTIIMRRMMMKIAEKIAQKNGSMALITGESLGQVASQTIESLYVTNASVSMPIFRPLIGMDKTEIIDLAQKISTFEISIRPYEDCCTIFVPKHPATKPKLDKVIEAEEKMEYQKYIDDFEEEVIEV</sequence>
<comment type="function">
    <text evidence="1">Catalyzes the ATP-dependent transfer of a sulfur to tRNA to produce 4-thiouridine in position 8 of tRNAs, which functions as a near-UV photosensor. Also catalyzes the transfer of sulfur to the sulfur carrier protein ThiS, forming ThiS-thiocarboxylate. This is a step in the synthesis of thiazole, in the thiamine biosynthesis pathway. The sulfur is donated as persulfide by IscS.</text>
</comment>
<comment type="catalytic activity">
    <reaction evidence="1">
        <text>[ThiI sulfur-carrier protein]-S-sulfanyl-L-cysteine + a uridine in tRNA + 2 reduced [2Fe-2S]-[ferredoxin] + ATP + H(+) = [ThiI sulfur-carrier protein]-L-cysteine + a 4-thiouridine in tRNA + 2 oxidized [2Fe-2S]-[ferredoxin] + AMP + diphosphate</text>
        <dbReference type="Rhea" id="RHEA:24176"/>
        <dbReference type="Rhea" id="RHEA-COMP:10000"/>
        <dbReference type="Rhea" id="RHEA-COMP:10001"/>
        <dbReference type="Rhea" id="RHEA-COMP:13337"/>
        <dbReference type="Rhea" id="RHEA-COMP:13338"/>
        <dbReference type="Rhea" id="RHEA-COMP:13339"/>
        <dbReference type="Rhea" id="RHEA-COMP:13340"/>
        <dbReference type="ChEBI" id="CHEBI:15378"/>
        <dbReference type="ChEBI" id="CHEBI:29950"/>
        <dbReference type="ChEBI" id="CHEBI:30616"/>
        <dbReference type="ChEBI" id="CHEBI:33019"/>
        <dbReference type="ChEBI" id="CHEBI:33737"/>
        <dbReference type="ChEBI" id="CHEBI:33738"/>
        <dbReference type="ChEBI" id="CHEBI:61963"/>
        <dbReference type="ChEBI" id="CHEBI:65315"/>
        <dbReference type="ChEBI" id="CHEBI:136798"/>
        <dbReference type="ChEBI" id="CHEBI:456215"/>
        <dbReference type="EC" id="2.8.1.4"/>
    </reaction>
</comment>
<comment type="catalytic activity">
    <reaction evidence="1">
        <text>[ThiS sulfur-carrier protein]-C-terminal Gly-Gly-AMP + S-sulfanyl-L-cysteinyl-[cysteine desulfurase] + AH2 = [ThiS sulfur-carrier protein]-C-terminal-Gly-aminoethanethioate + L-cysteinyl-[cysteine desulfurase] + A + AMP + 2 H(+)</text>
        <dbReference type="Rhea" id="RHEA:43340"/>
        <dbReference type="Rhea" id="RHEA-COMP:12157"/>
        <dbReference type="Rhea" id="RHEA-COMP:12158"/>
        <dbReference type="Rhea" id="RHEA-COMP:12910"/>
        <dbReference type="Rhea" id="RHEA-COMP:19908"/>
        <dbReference type="ChEBI" id="CHEBI:13193"/>
        <dbReference type="ChEBI" id="CHEBI:15378"/>
        <dbReference type="ChEBI" id="CHEBI:17499"/>
        <dbReference type="ChEBI" id="CHEBI:29950"/>
        <dbReference type="ChEBI" id="CHEBI:61963"/>
        <dbReference type="ChEBI" id="CHEBI:90618"/>
        <dbReference type="ChEBI" id="CHEBI:232372"/>
        <dbReference type="ChEBI" id="CHEBI:456215"/>
    </reaction>
</comment>
<comment type="pathway">
    <text evidence="1">Cofactor biosynthesis; thiamine diphosphate biosynthesis.</text>
</comment>
<comment type="subcellular location">
    <subcellularLocation>
        <location evidence="1">Cytoplasm</location>
    </subcellularLocation>
</comment>
<comment type="similarity">
    <text evidence="1">Belongs to the ThiI family.</text>
</comment>
<reference key="1">
    <citation type="submission" date="2008-01" db="EMBL/GenBank/DDBJ databases">
        <title>Complete sequence of Thermoanaerobacter pseudethanolicus 39E.</title>
        <authorList>
            <person name="Copeland A."/>
            <person name="Lucas S."/>
            <person name="Lapidus A."/>
            <person name="Barry K."/>
            <person name="Glavina del Rio T."/>
            <person name="Dalin E."/>
            <person name="Tice H."/>
            <person name="Pitluck S."/>
            <person name="Bruce D."/>
            <person name="Goodwin L."/>
            <person name="Saunders E."/>
            <person name="Brettin T."/>
            <person name="Detter J.C."/>
            <person name="Han C."/>
            <person name="Schmutz J."/>
            <person name="Larimer F."/>
            <person name="Land M."/>
            <person name="Hauser L."/>
            <person name="Kyrpides N."/>
            <person name="Lykidis A."/>
            <person name="Hemme C."/>
            <person name="Fields M.W."/>
            <person name="He Z."/>
            <person name="Zhou J."/>
            <person name="Richardson P."/>
        </authorList>
    </citation>
    <scope>NUCLEOTIDE SEQUENCE [LARGE SCALE GENOMIC DNA]</scope>
    <source>
        <strain>ATCC 33223 / DSM 2355 / 39E</strain>
    </source>
</reference>
<evidence type="ECO:0000255" key="1">
    <source>
        <dbReference type="HAMAP-Rule" id="MF_00021"/>
    </source>
</evidence>
<dbReference type="EC" id="2.8.1.4" evidence="1"/>
<dbReference type="EMBL" id="CP000924">
    <property type="protein sequence ID" value="ABY94455.1"/>
    <property type="molecule type" value="Genomic_DNA"/>
</dbReference>
<dbReference type="RefSeq" id="WP_012269178.1">
    <property type="nucleotide sequence ID" value="NC_010321.1"/>
</dbReference>
<dbReference type="SMR" id="B0K8J2"/>
<dbReference type="STRING" id="340099.Teth39_0798"/>
<dbReference type="KEGG" id="tpd:Teth39_0798"/>
<dbReference type="eggNOG" id="COG0301">
    <property type="taxonomic scope" value="Bacteria"/>
</dbReference>
<dbReference type="HOGENOM" id="CLU_037952_4_0_9"/>
<dbReference type="UniPathway" id="UPA00060"/>
<dbReference type="Proteomes" id="UP000002156">
    <property type="component" value="Chromosome"/>
</dbReference>
<dbReference type="GO" id="GO:0005829">
    <property type="term" value="C:cytosol"/>
    <property type="evidence" value="ECO:0007669"/>
    <property type="project" value="TreeGrafter"/>
</dbReference>
<dbReference type="GO" id="GO:0005524">
    <property type="term" value="F:ATP binding"/>
    <property type="evidence" value="ECO:0007669"/>
    <property type="project" value="UniProtKB-UniRule"/>
</dbReference>
<dbReference type="GO" id="GO:0004810">
    <property type="term" value="F:CCA tRNA nucleotidyltransferase activity"/>
    <property type="evidence" value="ECO:0007669"/>
    <property type="project" value="InterPro"/>
</dbReference>
<dbReference type="GO" id="GO:0000049">
    <property type="term" value="F:tRNA binding"/>
    <property type="evidence" value="ECO:0007669"/>
    <property type="project" value="UniProtKB-UniRule"/>
</dbReference>
<dbReference type="GO" id="GO:0140741">
    <property type="term" value="F:tRNA-uracil-4 sulfurtransferase activity"/>
    <property type="evidence" value="ECO:0007669"/>
    <property type="project" value="UniProtKB-EC"/>
</dbReference>
<dbReference type="GO" id="GO:0009228">
    <property type="term" value="P:thiamine biosynthetic process"/>
    <property type="evidence" value="ECO:0007669"/>
    <property type="project" value="UniProtKB-KW"/>
</dbReference>
<dbReference type="GO" id="GO:0009229">
    <property type="term" value="P:thiamine diphosphate biosynthetic process"/>
    <property type="evidence" value="ECO:0007669"/>
    <property type="project" value="UniProtKB-UniRule"/>
</dbReference>
<dbReference type="GO" id="GO:0052837">
    <property type="term" value="P:thiazole biosynthetic process"/>
    <property type="evidence" value="ECO:0007669"/>
    <property type="project" value="TreeGrafter"/>
</dbReference>
<dbReference type="GO" id="GO:0002937">
    <property type="term" value="P:tRNA 4-thiouridine biosynthesis"/>
    <property type="evidence" value="ECO:0007669"/>
    <property type="project" value="TreeGrafter"/>
</dbReference>
<dbReference type="CDD" id="cd01712">
    <property type="entry name" value="PPase_ThiI"/>
    <property type="match status" value="1"/>
</dbReference>
<dbReference type="CDD" id="cd11716">
    <property type="entry name" value="THUMP_ThiI"/>
    <property type="match status" value="1"/>
</dbReference>
<dbReference type="FunFam" id="3.40.50.620:FF:000053">
    <property type="entry name" value="Probable tRNA sulfurtransferase"/>
    <property type="match status" value="1"/>
</dbReference>
<dbReference type="Gene3D" id="3.30.2130.30">
    <property type="match status" value="1"/>
</dbReference>
<dbReference type="Gene3D" id="3.40.50.620">
    <property type="entry name" value="HUPs"/>
    <property type="match status" value="1"/>
</dbReference>
<dbReference type="HAMAP" id="MF_00021">
    <property type="entry name" value="ThiI"/>
    <property type="match status" value="1"/>
</dbReference>
<dbReference type="InterPro" id="IPR014729">
    <property type="entry name" value="Rossmann-like_a/b/a_fold"/>
</dbReference>
<dbReference type="InterPro" id="IPR020536">
    <property type="entry name" value="ThiI_AANH"/>
</dbReference>
<dbReference type="InterPro" id="IPR054173">
    <property type="entry name" value="ThiI_fer"/>
</dbReference>
<dbReference type="InterPro" id="IPR049961">
    <property type="entry name" value="ThiI_N"/>
</dbReference>
<dbReference type="InterPro" id="IPR004114">
    <property type="entry name" value="THUMP_dom"/>
</dbReference>
<dbReference type="InterPro" id="IPR049962">
    <property type="entry name" value="THUMP_ThiI"/>
</dbReference>
<dbReference type="InterPro" id="IPR003720">
    <property type="entry name" value="tRNA_STrfase"/>
</dbReference>
<dbReference type="InterPro" id="IPR050102">
    <property type="entry name" value="tRNA_sulfurtransferase_ThiI"/>
</dbReference>
<dbReference type="NCBIfam" id="TIGR00342">
    <property type="entry name" value="tRNA uracil 4-sulfurtransferase ThiI"/>
    <property type="match status" value="1"/>
</dbReference>
<dbReference type="PANTHER" id="PTHR43209">
    <property type="entry name" value="TRNA SULFURTRANSFERASE"/>
    <property type="match status" value="1"/>
</dbReference>
<dbReference type="PANTHER" id="PTHR43209:SF1">
    <property type="entry name" value="TRNA SULFURTRANSFERASE"/>
    <property type="match status" value="1"/>
</dbReference>
<dbReference type="Pfam" id="PF02568">
    <property type="entry name" value="ThiI"/>
    <property type="match status" value="1"/>
</dbReference>
<dbReference type="Pfam" id="PF22025">
    <property type="entry name" value="ThiI_fer"/>
    <property type="match status" value="1"/>
</dbReference>
<dbReference type="Pfam" id="PF02926">
    <property type="entry name" value="THUMP"/>
    <property type="match status" value="1"/>
</dbReference>
<dbReference type="SMART" id="SM00981">
    <property type="entry name" value="THUMP"/>
    <property type="match status" value="1"/>
</dbReference>
<dbReference type="SUPFAM" id="SSF52402">
    <property type="entry name" value="Adenine nucleotide alpha hydrolases-like"/>
    <property type="match status" value="1"/>
</dbReference>
<dbReference type="SUPFAM" id="SSF143437">
    <property type="entry name" value="THUMP domain-like"/>
    <property type="match status" value="1"/>
</dbReference>
<dbReference type="PROSITE" id="PS51165">
    <property type="entry name" value="THUMP"/>
    <property type="match status" value="1"/>
</dbReference>
<organism>
    <name type="scientific">Thermoanaerobacter pseudethanolicus (strain ATCC 33223 / 39E)</name>
    <name type="common">Clostridium thermohydrosulfuricum</name>
    <dbReference type="NCBI Taxonomy" id="340099"/>
    <lineage>
        <taxon>Bacteria</taxon>
        <taxon>Bacillati</taxon>
        <taxon>Bacillota</taxon>
        <taxon>Clostridia</taxon>
        <taxon>Thermoanaerobacterales</taxon>
        <taxon>Thermoanaerobacteraceae</taxon>
        <taxon>Thermoanaerobacter</taxon>
    </lineage>
</organism>
<gene>
    <name evidence="1" type="primary">thiI</name>
    <name type="ordered locus">Teth39_0798</name>
</gene>
<feature type="chain" id="PRO_1000090041" description="Probable tRNA sulfurtransferase">
    <location>
        <begin position="1"/>
        <end position="380"/>
    </location>
</feature>
<feature type="domain" description="THUMP" evidence="1">
    <location>
        <begin position="58"/>
        <end position="162"/>
    </location>
</feature>
<feature type="binding site" evidence="1">
    <location>
        <begin position="178"/>
        <end position="179"/>
    </location>
    <ligand>
        <name>ATP</name>
        <dbReference type="ChEBI" id="CHEBI:30616"/>
    </ligand>
</feature>
<feature type="binding site" evidence="1">
    <location>
        <begin position="203"/>
        <end position="204"/>
    </location>
    <ligand>
        <name>ATP</name>
        <dbReference type="ChEBI" id="CHEBI:30616"/>
    </ligand>
</feature>
<feature type="binding site" evidence="1">
    <location>
        <position position="260"/>
    </location>
    <ligand>
        <name>ATP</name>
        <dbReference type="ChEBI" id="CHEBI:30616"/>
    </ligand>
</feature>
<feature type="binding site" evidence="1">
    <location>
        <position position="282"/>
    </location>
    <ligand>
        <name>ATP</name>
        <dbReference type="ChEBI" id="CHEBI:30616"/>
    </ligand>
</feature>
<feature type="binding site" evidence="1">
    <location>
        <position position="291"/>
    </location>
    <ligand>
        <name>ATP</name>
        <dbReference type="ChEBI" id="CHEBI:30616"/>
    </ligand>
</feature>
<proteinExistence type="inferred from homology"/>
<keyword id="KW-0067">ATP-binding</keyword>
<keyword id="KW-0963">Cytoplasm</keyword>
<keyword id="KW-0547">Nucleotide-binding</keyword>
<keyword id="KW-1185">Reference proteome</keyword>
<keyword id="KW-0694">RNA-binding</keyword>
<keyword id="KW-0784">Thiamine biosynthesis</keyword>
<keyword id="KW-0808">Transferase</keyword>
<keyword id="KW-0820">tRNA-binding</keyword>
<name>THII_THEP3</name>
<accession>B0K8J2</accession>
<protein>
    <recommendedName>
        <fullName evidence="1">Probable tRNA sulfurtransferase</fullName>
        <ecNumber evidence="1">2.8.1.4</ecNumber>
    </recommendedName>
    <alternativeName>
        <fullName evidence="1">Sulfur carrier protein ThiS sulfurtransferase</fullName>
    </alternativeName>
    <alternativeName>
        <fullName evidence="1">Thiamine biosynthesis protein ThiI</fullName>
    </alternativeName>
    <alternativeName>
        <fullName evidence="1">tRNA 4-thiouridine synthase</fullName>
    </alternativeName>
</protein>